<organism>
    <name type="scientific">Mycobacterium tuberculosis (strain ATCC 25618 / H37Rv)</name>
    <dbReference type="NCBI Taxonomy" id="83332"/>
    <lineage>
        <taxon>Bacteria</taxon>
        <taxon>Bacillati</taxon>
        <taxon>Actinomycetota</taxon>
        <taxon>Actinomycetes</taxon>
        <taxon>Mycobacteriales</taxon>
        <taxon>Mycobacteriaceae</taxon>
        <taxon>Mycobacterium</taxon>
        <taxon>Mycobacterium tuberculosis complex</taxon>
    </lineage>
</organism>
<dbReference type="EC" id="2.1.1.-"/>
<dbReference type="EMBL" id="AL123456">
    <property type="protein sequence ID" value="CCP42814.1"/>
    <property type="molecule type" value="Genomic_DNA"/>
</dbReference>
<dbReference type="PIR" id="A70750">
    <property type="entry name" value="A70750"/>
</dbReference>
<dbReference type="RefSeq" id="NP_214603.1">
    <property type="nucleotide sequence ID" value="NC_000962.3"/>
</dbReference>
<dbReference type="RefSeq" id="WP_003400665.1">
    <property type="nucleotide sequence ID" value="NC_000962.3"/>
</dbReference>
<dbReference type="SMR" id="P9WK03"/>
<dbReference type="STRING" id="83332.Rv0089"/>
<dbReference type="PaxDb" id="83332-Rv0089"/>
<dbReference type="DNASU" id="886949"/>
<dbReference type="GeneID" id="886949"/>
<dbReference type="KEGG" id="mtu:Rv0089"/>
<dbReference type="KEGG" id="mtv:RVBD_0089"/>
<dbReference type="TubercuList" id="Rv0089"/>
<dbReference type="eggNOG" id="COG2226">
    <property type="taxonomic scope" value="Bacteria"/>
</dbReference>
<dbReference type="InParanoid" id="P9WK03"/>
<dbReference type="OrthoDB" id="6064711at2"/>
<dbReference type="PhylomeDB" id="P9WK03"/>
<dbReference type="Proteomes" id="UP000001584">
    <property type="component" value="Chromosome"/>
</dbReference>
<dbReference type="GO" id="GO:0009274">
    <property type="term" value="C:peptidoglycan-based cell wall"/>
    <property type="evidence" value="ECO:0007005"/>
    <property type="project" value="MTBBASE"/>
</dbReference>
<dbReference type="GO" id="GO:0008168">
    <property type="term" value="F:methyltransferase activity"/>
    <property type="evidence" value="ECO:0000318"/>
    <property type="project" value="GO_Central"/>
</dbReference>
<dbReference type="GO" id="GO:0008757">
    <property type="term" value="F:S-adenosylmethionine-dependent methyltransferase activity"/>
    <property type="evidence" value="ECO:0007669"/>
    <property type="project" value="InterPro"/>
</dbReference>
<dbReference type="GO" id="GO:0032259">
    <property type="term" value="P:methylation"/>
    <property type="evidence" value="ECO:0007669"/>
    <property type="project" value="UniProtKB-KW"/>
</dbReference>
<dbReference type="CDD" id="cd02440">
    <property type="entry name" value="AdoMet_MTases"/>
    <property type="match status" value="1"/>
</dbReference>
<dbReference type="Gene3D" id="3.40.50.150">
    <property type="entry name" value="Vaccinia Virus protein VP39"/>
    <property type="match status" value="1"/>
</dbReference>
<dbReference type="InterPro" id="IPR013216">
    <property type="entry name" value="Methyltransf_11"/>
</dbReference>
<dbReference type="InterPro" id="IPR029063">
    <property type="entry name" value="SAM-dependent_MTases_sf"/>
</dbReference>
<dbReference type="PANTHER" id="PTHR43861:SF1">
    <property type="entry name" value="TRANS-ACONITATE 2-METHYLTRANSFERASE"/>
    <property type="match status" value="1"/>
</dbReference>
<dbReference type="PANTHER" id="PTHR43861">
    <property type="entry name" value="TRANS-ACONITATE 2-METHYLTRANSFERASE-RELATED"/>
    <property type="match status" value="1"/>
</dbReference>
<dbReference type="Pfam" id="PF08241">
    <property type="entry name" value="Methyltransf_11"/>
    <property type="match status" value="1"/>
</dbReference>
<dbReference type="SUPFAM" id="SSF53335">
    <property type="entry name" value="S-adenosyl-L-methionine-dependent methyltransferases"/>
    <property type="match status" value="1"/>
</dbReference>
<accession>P9WK03</accession>
<accession>L0T2F1</accession>
<accession>P65346</accession>
<accession>Q10886</accession>
<feature type="chain" id="PRO_0000204441" description="Uncharacterized methyltransferase Rv0089">
    <location>
        <begin position="1"/>
        <end position="197"/>
    </location>
</feature>
<keyword id="KW-0489">Methyltransferase</keyword>
<keyword id="KW-1185">Reference proteome</keyword>
<keyword id="KW-0808">Transferase</keyword>
<gene>
    <name type="ordered locus">Rv0089</name>
    <name type="ORF">MTCY251.07</name>
</gene>
<sequence>MDQPWNANIHYDALLDAMVPLGTQCVLDVGCGDGLLAARLARRIPYVTAVDIDAPVLRRAQTRFANAPIRWLHADIMTAELPNAGFDAVVSNAALHHIEDTRTALSRLGGLVTPGGTLAVVTFVTPSLRNGLWHLTSWVACGMANRVKGKWEHSAPIKWPPPQTLHELRSHVRALLPGACIRRLLYGRVLVTWRAPV</sequence>
<evidence type="ECO:0000305" key="1"/>
<name>Y089_MYCTU</name>
<proteinExistence type="inferred from homology"/>
<comment type="similarity">
    <text evidence="1">Belongs to the methyltransferase superfamily.</text>
</comment>
<reference key="1">
    <citation type="journal article" date="1998" name="Nature">
        <title>Deciphering the biology of Mycobacterium tuberculosis from the complete genome sequence.</title>
        <authorList>
            <person name="Cole S.T."/>
            <person name="Brosch R."/>
            <person name="Parkhill J."/>
            <person name="Garnier T."/>
            <person name="Churcher C.M."/>
            <person name="Harris D.E."/>
            <person name="Gordon S.V."/>
            <person name="Eiglmeier K."/>
            <person name="Gas S."/>
            <person name="Barry C.E. III"/>
            <person name="Tekaia F."/>
            <person name="Badcock K."/>
            <person name="Basham D."/>
            <person name="Brown D."/>
            <person name="Chillingworth T."/>
            <person name="Connor R."/>
            <person name="Davies R.M."/>
            <person name="Devlin K."/>
            <person name="Feltwell T."/>
            <person name="Gentles S."/>
            <person name="Hamlin N."/>
            <person name="Holroyd S."/>
            <person name="Hornsby T."/>
            <person name="Jagels K."/>
            <person name="Krogh A."/>
            <person name="McLean J."/>
            <person name="Moule S."/>
            <person name="Murphy L.D."/>
            <person name="Oliver S."/>
            <person name="Osborne J."/>
            <person name="Quail M.A."/>
            <person name="Rajandream M.A."/>
            <person name="Rogers J."/>
            <person name="Rutter S."/>
            <person name="Seeger K."/>
            <person name="Skelton S."/>
            <person name="Squares S."/>
            <person name="Squares R."/>
            <person name="Sulston J.E."/>
            <person name="Taylor K."/>
            <person name="Whitehead S."/>
            <person name="Barrell B.G."/>
        </authorList>
    </citation>
    <scope>NUCLEOTIDE SEQUENCE [LARGE SCALE GENOMIC DNA]</scope>
    <source>
        <strain>ATCC 25618 / H37Rv</strain>
    </source>
</reference>
<protein>
    <recommendedName>
        <fullName>Uncharacterized methyltransferase Rv0089</fullName>
        <ecNumber>2.1.1.-</ecNumber>
    </recommendedName>
</protein>